<feature type="initiator methionine" description="Removed" evidence="2">
    <location>
        <position position="1"/>
    </location>
</feature>
<feature type="chain" id="PRO_0000051360" description="Ribosome biogenesis protein WDR12">
    <location>
        <begin position="2"/>
        <end position="423"/>
    </location>
</feature>
<feature type="repeat" description="WD 1">
    <location>
        <begin position="99"/>
        <end position="137"/>
    </location>
</feature>
<feature type="repeat" description="WD 2">
    <location>
        <begin position="138"/>
        <end position="180"/>
    </location>
</feature>
<feature type="repeat" description="WD 3">
    <location>
        <begin position="187"/>
        <end position="226"/>
    </location>
</feature>
<feature type="repeat" description="WD 4">
    <location>
        <begin position="255"/>
        <end position="293"/>
    </location>
</feature>
<feature type="repeat" description="WD 5">
    <location>
        <begin position="295"/>
        <end position="334"/>
    </location>
</feature>
<feature type="repeat" description="WD 6">
    <location>
        <begin position="340"/>
        <end position="380"/>
    </location>
</feature>
<feature type="repeat" description="WD 7">
    <location>
        <begin position="384"/>
        <end position="422"/>
    </location>
</feature>
<feature type="region of interest" description="Ubiquitin-like (UBL) domain" evidence="3">
    <location>
        <begin position="4"/>
        <end position="87"/>
    </location>
</feature>
<feature type="region of interest" description="Sufficient for nucleolar localization" evidence="1">
    <location>
        <begin position="98"/>
        <end position="423"/>
    </location>
</feature>
<feature type="region of interest" description="Disordered" evidence="4">
    <location>
        <begin position="222"/>
        <end position="242"/>
    </location>
</feature>
<feature type="modified residue" description="N-acetylalanine" evidence="2">
    <location>
        <position position="2"/>
    </location>
</feature>
<feature type="modified residue" description="Phosphoserine" evidence="2">
    <location>
        <position position="415"/>
    </location>
</feature>
<feature type="cross-link" description="Glycyl lysine isopeptide (Lys-Gly) (interchain with G-Cter in SUMO1)" evidence="2">
    <location>
        <position position="239"/>
    </location>
</feature>
<name>WDR12_RAT</name>
<protein>
    <recommendedName>
        <fullName evidence="3">Ribosome biogenesis protein WDR12</fullName>
    </recommendedName>
    <alternativeName>
        <fullName evidence="3">WD repeat-containing protein 12</fullName>
    </alternativeName>
</protein>
<sequence>MAQLQARFYTENKKYAVDDVPFSIPATSEVADLSNIINKLLETKNELHKHVEFDFLIKGQFLRMPLVKHMELEDISSEEVVELEYVEKYTAPQPEQCMFHDDWISSIKGAEEWILSGSYDKTSRIWSLEGKSIMTIVGHTDVVKDVAWVKKDSLSCLLLTASMDQTILLWEWNIERNKVKALHCCRGHAGSVDAIAVDSSGTKFCSGSWDKMLKIWSTVPTDEEDEIQEPTNRPRKKQKTEQLGLTRTPLVTLSGHTEAISSVLWSDADEVCSASWDHTVRVWDVESGGLKSTLTGNKVFNCISYSPLCKRLASGSTDRHIRLWDPRTKDGSLVSLSLTSHTGWVTSVKWSPTHDQQLISGSLDNMVKLWDTRSCKAPLYDLAAHEDKVLSVDWTDTGLLLSGGADNKLYSYRYSPTTSHVGA</sequence>
<comment type="function">
    <text evidence="3">Component of the PeBoW complex, which is required for maturation of 28S and 5.8S ribosomal RNAs and formation of the 60S ribosome.</text>
</comment>
<comment type="subunit">
    <text evidence="3">Component of the PeBoW complex, composed of BOP1, PES1 and WDR12. The complex is held together by BOP1, which interacts with PES1 via its N-terminal domain and with WDR12 via a high-affinity interaction between the seven-bladed beta-propeller domains of the 2 proteins. The PeBoW complex associates with the 66S pre-ribosome. Interacts (via UBL domain) with MDN1 (via VWFA/MIDAS domain).</text>
</comment>
<comment type="subcellular location">
    <subcellularLocation>
        <location evidence="3">Nucleus</location>
        <location evidence="3">Nucleolus</location>
    </subcellularLocation>
    <subcellularLocation>
        <location evidence="3">Nucleus</location>
        <location evidence="3">Nucleoplasm</location>
    </subcellularLocation>
</comment>
<comment type="similarity">
    <text evidence="3">Belongs to the WD repeat WDR12/YTM1 family.</text>
</comment>
<accession>P61480</accession>
<proteinExistence type="evidence at transcript level"/>
<organism>
    <name type="scientific">Rattus norvegicus</name>
    <name type="common">Rat</name>
    <dbReference type="NCBI Taxonomy" id="10116"/>
    <lineage>
        <taxon>Eukaryota</taxon>
        <taxon>Metazoa</taxon>
        <taxon>Chordata</taxon>
        <taxon>Craniata</taxon>
        <taxon>Vertebrata</taxon>
        <taxon>Euteleostomi</taxon>
        <taxon>Mammalia</taxon>
        <taxon>Eutheria</taxon>
        <taxon>Euarchontoglires</taxon>
        <taxon>Glires</taxon>
        <taxon>Rodentia</taxon>
        <taxon>Myomorpha</taxon>
        <taxon>Muroidea</taxon>
        <taxon>Muridae</taxon>
        <taxon>Murinae</taxon>
        <taxon>Rattus</taxon>
    </lineage>
</organism>
<reference key="1">
    <citation type="journal article" date="2004" name="Genome Res.">
        <title>The status, quality, and expansion of the NIH full-length cDNA project: the Mammalian Gene Collection (MGC).</title>
        <authorList>
            <consortium name="The MGC Project Team"/>
        </authorList>
    </citation>
    <scope>NUCLEOTIDE SEQUENCE [LARGE SCALE MRNA]</scope>
    <source>
        <tissue>Pituitary</tissue>
    </source>
</reference>
<keyword id="KW-0007">Acetylation</keyword>
<keyword id="KW-1017">Isopeptide bond</keyword>
<keyword id="KW-0539">Nucleus</keyword>
<keyword id="KW-0597">Phosphoprotein</keyword>
<keyword id="KW-1185">Reference proteome</keyword>
<keyword id="KW-0677">Repeat</keyword>
<keyword id="KW-0690">Ribosome biogenesis</keyword>
<keyword id="KW-0698">rRNA processing</keyword>
<keyword id="KW-0832">Ubl conjugation</keyword>
<keyword id="KW-0853">WD repeat</keyword>
<gene>
    <name type="primary">Wdr12</name>
</gene>
<evidence type="ECO:0000250" key="1"/>
<evidence type="ECO:0000250" key="2">
    <source>
        <dbReference type="UniProtKB" id="Q9GZL7"/>
    </source>
</evidence>
<evidence type="ECO:0000255" key="3">
    <source>
        <dbReference type="HAMAP-Rule" id="MF_03029"/>
    </source>
</evidence>
<evidence type="ECO:0000256" key="4">
    <source>
        <dbReference type="SAM" id="MobiDB-lite"/>
    </source>
</evidence>
<dbReference type="EMBL" id="BC063180">
    <property type="protein sequence ID" value="AAH63180.1"/>
    <property type="molecule type" value="mRNA"/>
</dbReference>
<dbReference type="RefSeq" id="NP_001380797.1">
    <property type="nucleotide sequence ID" value="NM_001393868.1"/>
</dbReference>
<dbReference type="RefSeq" id="NP_001380798.1">
    <property type="nucleotide sequence ID" value="NM_001393869.1"/>
</dbReference>
<dbReference type="RefSeq" id="NP_955442.1">
    <property type="nucleotide sequence ID" value="NM_199410.3"/>
</dbReference>
<dbReference type="RefSeq" id="XP_017452007.1">
    <property type="nucleotide sequence ID" value="XM_017596518.1"/>
</dbReference>
<dbReference type="RefSeq" id="XP_017452008.1">
    <property type="nucleotide sequence ID" value="XM_017596519.1"/>
</dbReference>
<dbReference type="RefSeq" id="XP_017452009.1">
    <property type="nucleotide sequence ID" value="XM_017596520.3"/>
</dbReference>
<dbReference type="RefSeq" id="XP_017452010.1">
    <property type="nucleotide sequence ID" value="XM_017596521.1"/>
</dbReference>
<dbReference type="SMR" id="P61480"/>
<dbReference type="FunCoup" id="P61480">
    <property type="interactions" value="2964"/>
</dbReference>
<dbReference type="STRING" id="10116.ENSRNOP00000023463"/>
<dbReference type="iPTMnet" id="P61480"/>
<dbReference type="PhosphoSitePlus" id="P61480"/>
<dbReference type="jPOST" id="P61480"/>
<dbReference type="PaxDb" id="10116-ENSRNOP00000023463"/>
<dbReference type="Ensembl" id="ENSRNOT00000023463.6">
    <property type="protein sequence ID" value="ENSRNOP00000023463.3"/>
    <property type="gene ID" value="ENSRNOG00000017340.6"/>
</dbReference>
<dbReference type="GeneID" id="363237"/>
<dbReference type="KEGG" id="rno:363237"/>
<dbReference type="UCSC" id="RGD:735072">
    <property type="organism name" value="rat"/>
</dbReference>
<dbReference type="AGR" id="RGD:735072"/>
<dbReference type="CTD" id="55759"/>
<dbReference type="RGD" id="735072">
    <property type="gene designation" value="Wdr12"/>
</dbReference>
<dbReference type="eggNOG" id="KOG0313">
    <property type="taxonomic scope" value="Eukaryota"/>
</dbReference>
<dbReference type="GeneTree" id="ENSGT00930000150950"/>
<dbReference type="HOGENOM" id="CLU_000288_57_0_1"/>
<dbReference type="InParanoid" id="P61480"/>
<dbReference type="OMA" id="DHKYVEF"/>
<dbReference type="OrthoDB" id="10251381at2759"/>
<dbReference type="PhylomeDB" id="P61480"/>
<dbReference type="TreeFam" id="TF313023"/>
<dbReference type="Reactome" id="R-RNO-6791226">
    <property type="pathway name" value="Major pathway of rRNA processing in the nucleolus and cytosol"/>
</dbReference>
<dbReference type="PRO" id="PR:P61480"/>
<dbReference type="Proteomes" id="UP000002494">
    <property type="component" value="Chromosome 9"/>
</dbReference>
<dbReference type="Bgee" id="ENSRNOG00000017340">
    <property type="expression patterns" value="Expressed in testis and 20 other cell types or tissues"/>
</dbReference>
<dbReference type="GO" id="GO:0005730">
    <property type="term" value="C:nucleolus"/>
    <property type="evidence" value="ECO:0000250"/>
    <property type="project" value="UniProtKB"/>
</dbReference>
<dbReference type="GO" id="GO:0005654">
    <property type="term" value="C:nucleoplasm"/>
    <property type="evidence" value="ECO:0000250"/>
    <property type="project" value="UniProtKB"/>
</dbReference>
<dbReference type="GO" id="GO:0005634">
    <property type="term" value="C:nucleus"/>
    <property type="evidence" value="ECO:0000266"/>
    <property type="project" value="RGD"/>
</dbReference>
<dbReference type="GO" id="GO:0070545">
    <property type="term" value="C:PeBoW complex"/>
    <property type="evidence" value="ECO:0000250"/>
    <property type="project" value="UniProtKB"/>
</dbReference>
<dbReference type="GO" id="GO:0030687">
    <property type="term" value="C:preribosome, large subunit precursor"/>
    <property type="evidence" value="ECO:0000250"/>
    <property type="project" value="UniProtKB"/>
</dbReference>
<dbReference type="GO" id="GO:0043021">
    <property type="term" value="F:ribonucleoprotein complex binding"/>
    <property type="evidence" value="ECO:0007669"/>
    <property type="project" value="UniProtKB-UniRule"/>
</dbReference>
<dbReference type="GO" id="GO:0000466">
    <property type="term" value="P:maturation of 5.8S rRNA from tricistronic rRNA transcript (SSU-rRNA, 5.8S rRNA, LSU-rRNA)"/>
    <property type="evidence" value="ECO:0000250"/>
    <property type="project" value="UniProtKB"/>
</dbReference>
<dbReference type="GO" id="GO:0000463">
    <property type="term" value="P:maturation of LSU-rRNA from tricistronic rRNA transcript (SSU-rRNA, 5.8S rRNA, LSU-rRNA)"/>
    <property type="evidence" value="ECO:0000250"/>
    <property type="project" value="UniProtKB"/>
</dbReference>
<dbReference type="GO" id="GO:0007219">
    <property type="term" value="P:Notch signaling pathway"/>
    <property type="evidence" value="ECO:0000266"/>
    <property type="project" value="RGD"/>
</dbReference>
<dbReference type="GO" id="GO:0051726">
    <property type="term" value="P:regulation of cell cycle"/>
    <property type="evidence" value="ECO:0000250"/>
    <property type="project" value="UniProtKB"/>
</dbReference>
<dbReference type="CDD" id="cd00200">
    <property type="entry name" value="WD40"/>
    <property type="match status" value="1"/>
</dbReference>
<dbReference type="FunFam" id="2.130.10.10:FF:000272">
    <property type="entry name" value="Ribosome biogenesis protein WDR12"/>
    <property type="match status" value="1"/>
</dbReference>
<dbReference type="Gene3D" id="2.130.10.10">
    <property type="entry name" value="YVTN repeat-like/Quinoprotein amine dehydrogenase"/>
    <property type="match status" value="1"/>
</dbReference>
<dbReference type="HAMAP" id="MF_03029">
    <property type="entry name" value="WDR12"/>
    <property type="match status" value="1"/>
</dbReference>
<dbReference type="InterPro" id="IPR020472">
    <property type="entry name" value="G-protein_beta_WD-40_rep"/>
</dbReference>
<dbReference type="InterPro" id="IPR012972">
    <property type="entry name" value="NLE"/>
</dbReference>
<dbReference type="InterPro" id="IPR015943">
    <property type="entry name" value="WD40/YVTN_repeat-like_dom_sf"/>
</dbReference>
<dbReference type="InterPro" id="IPR019775">
    <property type="entry name" value="WD40_repeat_CS"/>
</dbReference>
<dbReference type="InterPro" id="IPR036322">
    <property type="entry name" value="WD40_repeat_dom_sf"/>
</dbReference>
<dbReference type="InterPro" id="IPR001680">
    <property type="entry name" value="WD40_rpt"/>
</dbReference>
<dbReference type="InterPro" id="IPR028599">
    <property type="entry name" value="WDR12/Ytm1"/>
</dbReference>
<dbReference type="PANTHER" id="PTHR19855:SF11">
    <property type="entry name" value="RIBOSOME BIOGENESIS PROTEIN WDR12"/>
    <property type="match status" value="1"/>
</dbReference>
<dbReference type="PANTHER" id="PTHR19855">
    <property type="entry name" value="WD40 REPEAT PROTEIN 12, 37"/>
    <property type="match status" value="1"/>
</dbReference>
<dbReference type="Pfam" id="PF08154">
    <property type="entry name" value="NLE"/>
    <property type="match status" value="1"/>
</dbReference>
<dbReference type="Pfam" id="PF00400">
    <property type="entry name" value="WD40"/>
    <property type="match status" value="7"/>
</dbReference>
<dbReference type="PRINTS" id="PR00320">
    <property type="entry name" value="GPROTEINBRPT"/>
</dbReference>
<dbReference type="SMART" id="SM00320">
    <property type="entry name" value="WD40"/>
    <property type="match status" value="7"/>
</dbReference>
<dbReference type="SUPFAM" id="SSF50978">
    <property type="entry name" value="WD40 repeat-like"/>
    <property type="match status" value="1"/>
</dbReference>
<dbReference type="PROSITE" id="PS00678">
    <property type="entry name" value="WD_REPEATS_1"/>
    <property type="match status" value="2"/>
</dbReference>
<dbReference type="PROSITE" id="PS50082">
    <property type="entry name" value="WD_REPEATS_2"/>
    <property type="match status" value="5"/>
</dbReference>
<dbReference type="PROSITE" id="PS50294">
    <property type="entry name" value="WD_REPEATS_REGION"/>
    <property type="match status" value="1"/>
</dbReference>